<organism>
    <name type="scientific">Phocaeicola vulgatus (strain ATCC 8482 / DSM 1447 / JCM 5826 / CCUG 4940 / NBRC 14291 / NCTC 11154)</name>
    <name type="common">Bacteroides vulgatus</name>
    <dbReference type="NCBI Taxonomy" id="435590"/>
    <lineage>
        <taxon>Bacteria</taxon>
        <taxon>Pseudomonadati</taxon>
        <taxon>Bacteroidota</taxon>
        <taxon>Bacteroidia</taxon>
        <taxon>Bacteroidales</taxon>
        <taxon>Bacteroidaceae</taxon>
        <taxon>Phocaeicola</taxon>
    </lineage>
</organism>
<comment type="function">
    <text evidence="1">Necessary for normal cell division and for the maintenance of normal septation.</text>
</comment>
<comment type="cofactor">
    <cofactor evidence="1">
        <name>Mg(2+)</name>
        <dbReference type="ChEBI" id="CHEBI:18420"/>
    </cofactor>
</comment>
<comment type="similarity">
    <text evidence="1">Belongs to the TRAFAC class TrmE-Era-EngA-EngB-Septin-like GTPase superfamily. EngB GTPase family.</text>
</comment>
<protein>
    <recommendedName>
        <fullName evidence="1">Probable GTP-binding protein EngB</fullName>
    </recommendedName>
</protein>
<reference key="1">
    <citation type="journal article" date="2007" name="PLoS Biol.">
        <title>Evolution of symbiotic bacteria in the distal human intestine.</title>
        <authorList>
            <person name="Xu J."/>
            <person name="Mahowald M.A."/>
            <person name="Ley R.E."/>
            <person name="Lozupone C.A."/>
            <person name="Hamady M."/>
            <person name="Martens E.C."/>
            <person name="Henrissat B."/>
            <person name="Coutinho P.M."/>
            <person name="Minx P."/>
            <person name="Latreille P."/>
            <person name="Cordum H."/>
            <person name="Van Brunt A."/>
            <person name="Kim K."/>
            <person name="Fulton R.S."/>
            <person name="Fulton L.A."/>
            <person name="Clifton S.W."/>
            <person name="Wilson R.K."/>
            <person name="Knight R.D."/>
            <person name="Gordon J.I."/>
        </authorList>
    </citation>
    <scope>NUCLEOTIDE SEQUENCE [LARGE SCALE GENOMIC DNA]</scope>
    <source>
        <strain>ATCC 8482 / DSM 1447 / JCM 5826 / CCUG 4940 / NBRC 14291 / NCTC 11154</strain>
    </source>
</reference>
<dbReference type="EMBL" id="CP000139">
    <property type="protein sequence ID" value="ABR40607.1"/>
    <property type="molecule type" value="Genomic_DNA"/>
</dbReference>
<dbReference type="SMR" id="A6L4J3"/>
<dbReference type="STRING" id="435590.BVU_2968"/>
<dbReference type="PaxDb" id="435590-BVU_2968"/>
<dbReference type="GeneID" id="5303929"/>
<dbReference type="KEGG" id="bvu:BVU_2968"/>
<dbReference type="eggNOG" id="COG0218">
    <property type="taxonomic scope" value="Bacteria"/>
</dbReference>
<dbReference type="HOGENOM" id="CLU_033732_3_1_10"/>
<dbReference type="BioCyc" id="BVUL435590:G1G59-3091-MONOMER"/>
<dbReference type="Proteomes" id="UP000002861">
    <property type="component" value="Chromosome"/>
</dbReference>
<dbReference type="GO" id="GO:0005525">
    <property type="term" value="F:GTP binding"/>
    <property type="evidence" value="ECO:0007669"/>
    <property type="project" value="UniProtKB-UniRule"/>
</dbReference>
<dbReference type="GO" id="GO:0046872">
    <property type="term" value="F:metal ion binding"/>
    <property type="evidence" value="ECO:0007669"/>
    <property type="project" value="UniProtKB-KW"/>
</dbReference>
<dbReference type="GO" id="GO:0000917">
    <property type="term" value="P:division septum assembly"/>
    <property type="evidence" value="ECO:0007669"/>
    <property type="project" value="UniProtKB-KW"/>
</dbReference>
<dbReference type="CDD" id="cd01876">
    <property type="entry name" value="YihA_EngB"/>
    <property type="match status" value="1"/>
</dbReference>
<dbReference type="FunFam" id="3.40.50.300:FF:000098">
    <property type="entry name" value="Probable GTP-binding protein EngB"/>
    <property type="match status" value="1"/>
</dbReference>
<dbReference type="Gene3D" id="3.40.50.300">
    <property type="entry name" value="P-loop containing nucleotide triphosphate hydrolases"/>
    <property type="match status" value="1"/>
</dbReference>
<dbReference type="HAMAP" id="MF_00321">
    <property type="entry name" value="GTPase_EngB"/>
    <property type="match status" value="1"/>
</dbReference>
<dbReference type="InterPro" id="IPR030393">
    <property type="entry name" value="G_ENGB_dom"/>
</dbReference>
<dbReference type="InterPro" id="IPR006073">
    <property type="entry name" value="GTP-bd"/>
</dbReference>
<dbReference type="InterPro" id="IPR019987">
    <property type="entry name" value="GTP-bd_ribosome_bio_YsxC"/>
</dbReference>
<dbReference type="InterPro" id="IPR027417">
    <property type="entry name" value="P-loop_NTPase"/>
</dbReference>
<dbReference type="NCBIfam" id="TIGR03598">
    <property type="entry name" value="GTPase_YsxC"/>
    <property type="match status" value="1"/>
</dbReference>
<dbReference type="PANTHER" id="PTHR11649:SF13">
    <property type="entry name" value="ENGB-TYPE G DOMAIN-CONTAINING PROTEIN"/>
    <property type="match status" value="1"/>
</dbReference>
<dbReference type="PANTHER" id="PTHR11649">
    <property type="entry name" value="MSS1/TRME-RELATED GTP-BINDING PROTEIN"/>
    <property type="match status" value="1"/>
</dbReference>
<dbReference type="Pfam" id="PF01926">
    <property type="entry name" value="MMR_HSR1"/>
    <property type="match status" value="1"/>
</dbReference>
<dbReference type="SUPFAM" id="SSF52540">
    <property type="entry name" value="P-loop containing nucleoside triphosphate hydrolases"/>
    <property type="match status" value="1"/>
</dbReference>
<dbReference type="PROSITE" id="PS51706">
    <property type="entry name" value="G_ENGB"/>
    <property type="match status" value="1"/>
</dbReference>
<feature type="chain" id="PRO_1000005800" description="Probable GTP-binding protein EngB">
    <location>
        <begin position="1"/>
        <end position="200"/>
    </location>
</feature>
<feature type="domain" description="EngB-type G" evidence="1">
    <location>
        <begin position="22"/>
        <end position="197"/>
    </location>
</feature>
<feature type="binding site" evidence="1">
    <location>
        <begin position="30"/>
        <end position="37"/>
    </location>
    <ligand>
        <name>GTP</name>
        <dbReference type="ChEBI" id="CHEBI:37565"/>
    </ligand>
</feature>
<feature type="binding site" evidence="1">
    <location>
        <position position="37"/>
    </location>
    <ligand>
        <name>Mg(2+)</name>
        <dbReference type="ChEBI" id="CHEBI:18420"/>
    </ligand>
</feature>
<feature type="binding site" evidence="1">
    <location>
        <begin position="57"/>
        <end position="61"/>
    </location>
    <ligand>
        <name>GTP</name>
        <dbReference type="ChEBI" id="CHEBI:37565"/>
    </ligand>
</feature>
<feature type="binding site" evidence="1">
    <location>
        <position position="59"/>
    </location>
    <ligand>
        <name>Mg(2+)</name>
        <dbReference type="ChEBI" id="CHEBI:18420"/>
    </ligand>
</feature>
<feature type="binding site" evidence="1">
    <location>
        <begin position="75"/>
        <end position="78"/>
    </location>
    <ligand>
        <name>GTP</name>
        <dbReference type="ChEBI" id="CHEBI:37565"/>
    </ligand>
</feature>
<feature type="binding site" evidence="1">
    <location>
        <begin position="142"/>
        <end position="145"/>
    </location>
    <ligand>
        <name>GTP</name>
        <dbReference type="ChEBI" id="CHEBI:37565"/>
    </ligand>
</feature>
<feature type="binding site" evidence="1">
    <location>
        <begin position="173"/>
        <end position="178"/>
    </location>
    <ligand>
        <name>GTP</name>
        <dbReference type="ChEBI" id="CHEBI:37565"/>
    </ligand>
</feature>
<gene>
    <name evidence="1" type="primary">engB</name>
    <name type="ordered locus">BVU_2968</name>
</gene>
<accession>A6L4J3</accession>
<evidence type="ECO:0000255" key="1">
    <source>
        <dbReference type="HAMAP-Rule" id="MF_00321"/>
    </source>
</evidence>
<proteinExistence type="inferred from homology"/>
<sequence length="200" mass="23034">MEILSAEFVVSNTKVEKCPQDNLPEYAFIGRSNVGKSSLINMLAKRPKLAMTSSTPGKTLLINHFLINKEWYLVDLPGYGYASRGKKQVEKIQQIIEDYILEREQMTNLFVLIDCRLEPQKIDLEFMEWLGENGVPFSIIFTKADKLTNGKVKDNVNKYLKKLTEQWEELPPHFVSSSEKKTGRQEILDYIDSINRSLKA</sequence>
<keyword id="KW-0131">Cell cycle</keyword>
<keyword id="KW-0132">Cell division</keyword>
<keyword id="KW-0342">GTP-binding</keyword>
<keyword id="KW-0460">Magnesium</keyword>
<keyword id="KW-0479">Metal-binding</keyword>
<keyword id="KW-0547">Nucleotide-binding</keyword>
<keyword id="KW-0717">Septation</keyword>
<name>ENGB_PHOV8</name>